<organism>
    <name type="scientific">Shigella sonnei (strain Ss046)</name>
    <dbReference type="NCBI Taxonomy" id="300269"/>
    <lineage>
        <taxon>Bacteria</taxon>
        <taxon>Pseudomonadati</taxon>
        <taxon>Pseudomonadota</taxon>
        <taxon>Gammaproteobacteria</taxon>
        <taxon>Enterobacterales</taxon>
        <taxon>Enterobacteriaceae</taxon>
        <taxon>Shigella</taxon>
    </lineage>
</organism>
<reference key="1">
    <citation type="journal article" date="2005" name="Nucleic Acids Res.">
        <title>Genome dynamics and diversity of Shigella species, the etiologic agents of bacillary dysentery.</title>
        <authorList>
            <person name="Yang F."/>
            <person name="Yang J."/>
            <person name="Zhang X."/>
            <person name="Chen L."/>
            <person name="Jiang Y."/>
            <person name="Yan Y."/>
            <person name="Tang X."/>
            <person name="Wang J."/>
            <person name="Xiong Z."/>
            <person name="Dong J."/>
            <person name="Xue Y."/>
            <person name="Zhu Y."/>
            <person name="Xu X."/>
            <person name="Sun L."/>
            <person name="Chen S."/>
            <person name="Nie H."/>
            <person name="Peng J."/>
            <person name="Xu J."/>
            <person name="Wang Y."/>
            <person name="Yuan Z."/>
            <person name="Wen Y."/>
            <person name="Yao Z."/>
            <person name="Shen Y."/>
            <person name="Qiang B."/>
            <person name="Hou Y."/>
            <person name="Yu J."/>
            <person name="Jin Q."/>
        </authorList>
    </citation>
    <scope>NUCLEOTIDE SEQUENCE [LARGE SCALE GENOMIC DNA]</scope>
    <source>
        <strain>Ss046</strain>
    </source>
</reference>
<comment type="function">
    <text evidence="1">Catalyzes the hydrolysis of the amide bond of N(2)-acetylated L-amino acids. Cleaves the acetyl group from N-acetyl-L-ornithine to form L-ornithine, an intermediate in L-arginine biosynthesis pathway, and a branchpoint in the synthesis of polyamines.</text>
</comment>
<comment type="catalytic activity">
    <reaction evidence="1">
        <text>N(2)-acetyl-L-ornithine + H2O = L-ornithine + acetate</text>
        <dbReference type="Rhea" id="RHEA:15941"/>
        <dbReference type="ChEBI" id="CHEBI:15377"/>
        <dbReference type="ChEBI" id="CHEBI:30089"/>
        <dbReference type="ChEBI" id="CHEBI:46911"/>
        <dbReference type="ChEBI" id="CHEBI:57805"/>
        <dbReference type="EC" id="3.5.1.16"/>
    </reaction>
</comment>
<comment type="cofactor">
    <cofactor evidence="1">
        <name>Zn(2+)</name>
        <dbReference type="ChEBI" id="CHEBI:29105"/>
    </cofactor>
    <cofactor evidence="1">
        <name>Co(2+)</name>
        <dbReference type="ChEBI" id="CHEBI:48828"/>
    </cofactor>
    <text evidence="1">Binds 2 Zn(2+) or Co(2+) ions per subunit.</text>
</comment>
<comment type="cofactor">
    <cofactor evidence="1">
        <name>glutathione</name>
        <dbReference type="ChEBI" id="CHEBI:57925"/>
    </cofactor>
</comment>
<comment type="pathway">
    <text evidence="1">Amino-acid biosynthesis; L-arginine biosynthesis; L-ornithine from N(2)-acetyl-L-ornithine (linear): step 1/1.</text>
</comment>
<comment type="subunit">
    <text evidence="1">Homodimer.</text>
</comment>
<comment type="subcellular location">
    <subcellularLocation>
        <location evidence="1">Cytoplasm</location>
    </subcellularLocation>
</comment>
<comment type="similarity">
    <text evidence="1">Belongs to the peptidase M20A family. ArgE subfamily.</text>
</comment>
<protein>
    <recommendedName>
        <fullName evidence="1">Acetylornithine deacetylase</fullName>
        <shortName evidence="1">AO</shortName>
        <shortName evidence="1">Acetylornithinase</shortName>
        <ecNumber evidence="1">3.5.1.16</ecNumber>
    </recommendedName>
    <alternativeName>
        <fullName evidence="1">N-acetylornithinase</fullName>
        <shortName evidence="1">NAO</shortName>
    </alternativeName>
</protein>
<sequence length="383" mass="42419">MKNKLPPFIEIYRALIATPSISATEEALDQSNADLITLLADWFKDLGFNVEVQPVPGTRNKFNMLASIGQGAGGLLLAGHTDTVPFDDGRWTRDPFTLTEHDGKLYGLGTADMKGFFAFILDTLRDVDVTKLKKPLYILATADEETSMAGARYFAETTALRPDCAIIGEPTSLQPVRAHKGHISNAIRIQGQSGHSSDPARGVNAIELMHDAIGHILQLRDNLKERYHYEAFTVPYPTLNLGHIHGGDASNRICACCELHMDIRPLPSMTLNELNGLLNDALAPVSERWPGRLTVDELHPPIPGYECPPNHQLVEVVEKLLGAKTEVVNYCTEAPFIQTLCPTLVLGPGSINQAHQPDEYLETRFIKPTRELIIQVIHHFCWH</sequence>
<gene>
    <name evidence="1" type="primary">argE</name>
    <name type="ordered locus">SSON_4130</name>
</gene>
<keyword id="KW-0028">Amino-acid biosynthesis</keyword>
<keyword id="KW-0055">Arginine biosynthesis</keyword>
<keyword id="KW-0170">Cobalt</keyword>
<keyword id="KW-0963">Cytoplasm</keyword>
<keyword id="KW-0378">Hydrolase</keyword>
<keyword id="KW-0479">Metal-binding</keyword>
<keyword id="KW-1185">Reference proteome</keyword>
<keyword id="KW-0862">Zinc</keyword>
<accession>Q3YV19</accession>
<feature type="chain" id="PRO_1000065064" description="Acetylornithine deacetylase">
    <location>
        <begin position="1"/>
        <end position="383"/>
    </location>
</feature>
<feature type="active site" evidence="1">
    <location>
        <position position="82"/>
    </location>
</feature>
<feature type="active site" evidence="1">
    <location>
        <position position="144"/>
    </location>
</feature>
<feature type="binding site" evidence="1">
    <location>
        <position position="80"/>
    </location>
    <ligand>
        <name>Zn(2+)</name>
        <dbReference type="ChEBI" id="CHEBI:29105"/>
        <label>1</label>
    </ligand>
</feature>
<feature type="binding site" evidence="1">
    <location>
        <position position="112"/>
    </location>
    <ligand>
        <name>Zn(2+)</name>
        <dbReference type="ChEBI" id="CHEBI:29105"/>
        <label>1</label>
    </ligand>
</feature>
<feature type="binding site" evidence="1">
    <location>
        <position position="112"/>
    </location>
    <ligand>
        <name>Zn(2+)</name>
        <dbReference type="ChEBI" id="CHEBI:29105"/>
        <label>2</label>
    </ligand>
</feature>
<feature type="binding site" evidence="1">
    <location>
        <position position="145"/>
    </location>
    <ligand>
        <name>Zn(2+)</name>
        <dbReference type="ChEBI" id="CHEBI:29105"/>
        <label>2</label>
    </ligand>
</feature>
<feature type="binding site" evidence="1">
    <location>
        <position position="169"/>
    </location>
    <ligand>
        <name>Zn(2+)</name>
        <dbReference type="ChEBI" id="CHEBI:29105"/>
        <label>1</label>
    </ligand>
</feature>
<feature type="binding site" evidence="1">
    <location>
        <position position="355"/>
    </location>
    <ligand>
        <name>Zn(2+)</name>
        <dbReference type="ChEBI" id="CHEBI:29105"/>
        <label>2</label>
    </ligand>
</feature>
<dbReference type="EC" id="3.5.1.16" evidence="1"/>
<dbReference type="EMBL" id="CP000038">
    <property type="protein sequence ID" value="AAZ90643.1"/>
    <property type="molecule type" value="Genomic_DNA"/>
</dbReference>
<dbReference type="RefSeq" id="WP_005155819.1">
    <property type="nucleotide sequence ID" value="NC_007384.1"/>
</dbReference>
<dbReference type="SMR" id="Q3YV19"/>
<dbReference type="MEROPS" id="M20.974"/>
<dbReference type="KEGG" id="ssn:SSON_4130"/>
<dbReference type="HOGENOM" id="CLU_021802_2_4_6"/>
<dbReference type="UniPathway" id="UPA00068">
    <property type="reaction ID" value="UER00110"/>
</dbReference>
<dbReference type="Proteomes" id="UP000002529">
    <property type="component" value="Chromosome"/>
</dbReference>
<dbReference type="GO" id="GO:0005737">
    <property type="term" value="C:cytoplasm"/>
    <property type="evidence" value="ECO:0007669"/>
    <property type="project" value="UniProtKB-SubCell"/>
</dbReference>
<dbReference type="GO" id="GO:0008777">
    <property type="term" value="F:acetylornithine deacetylase activity"/>
    <property type="evidence" value="ECO:0007669"/>
    <property type="project" value="UniProtKB-UniRule"/>
</dbReference>
<dbReference type="GO" id="GO:0008270">
    <property type="term" value="F:zinc ion binding"/>
    <property type="evidence" value="ECO:0007669"/>
    <property type="project" value="UniProtKB-UniRule"/>
</dbReference>
<dbReference type="GO" id="GO:0006526">
    <property type="term" value="P:L-arginine biosynthetic process"/>
    <property type="evidence" value="ECO:0007669"/>
    <property type="project" value="UniProtKB-UniRule"/>
</dbReference>
<dbReference type="CDD" id="cd03894">
    <property type="entry name" value="M20_ArgE"/>
    <property type="match status" value="1"/>
</dbReference>
<dbReference type="FunFam" id="3.30.70.360:FF:000003">
    <property type="entry name" value="Acetylornithine deacetylase"/>
    <property type="match status" value="1"/>
</dbReference>
<dbReference type="Gene3D" id="3.30.70.360">
    <property type="match status" value="1"/>
</dbReference>
<dbReference type="Gene3D" id="3.40.630.10">
    <property type="entry name" value="Zn peptidases"/>
    <property type="match status" value="1"/>
</dbReference>
<dbReference type="HAMAP" id="MF_01108">
    <property type="entry name" value="ArgE"/>
    <property type="match status" value="1"/>
</dbReference>
<dbReference type="InterPro" id="IPR010169">
    <property type="entry name" value="AcOrn-deacetyl"/>
</dbReference>
<dbReference type="InterPro" id="IPR001261">
    <property type="entry name" value="ArgE/DapE_CS"/>
</dbReference>
<dbReference type="InterPro" id="IPR036264">
    <property type="entry name" value="Bact_exopeptidase_dim_dom"/>
</dbReference>
<dbReference type="InterPro" id="IPR002933">
    <property type="entry name" value="Peptidase_M20"/>
</dbReference>
<dbReference type="InterPro" id="IPR011650">
    <property type="entry name" value="Peptidase_M20_dimer"/>
</dbReference>
<dbReference type="InterPro" id="IPR050072">
    <property type="entry name" value="Peptidase_M20A"/>
</dbReference>
<dbReference type="NCBIfam" id="TIGR01892">
    <property type="entry name" value="AcOrn-deacetyl"/>
    <property type="match status" value="1"/>
</dbReference>
<dbReference type="NCBIfam" id="NF003474">
    <property type="entry name" value="PRK05111.1"/>
    <property type="match status" value="1"/>
</dbReference>
<dbReference type="PANTHER" id="PTHR43808">
    <property type="entry name" value="ACETYLORNITHINE DEACETYLASE"/>
    <property type="match status" value="1"/>
</dbReference>
<dbReference type="PANTHER" id="PTHR43808:SF1">
    <property type="entry name" value="ACETYLORNITHINE DEACETYLASE"/>
    <property type="match status" value="1"/>
</dbReference>
<dbReference type="Pfam" id="PF07687">
    <property type="entry name" value="M20_dimer"/>
    <property type="match status" value="1"/>
</dbReference>
<dbReference type="Pfam" id="PF01546">
    <property type="entry name" value="Peptidase_M20"/>
    <property type="match status" value="1"/>
</dbReference>
<dbReference type="SUPFAM" id="SSF55031">
    <property type="entry name" value="Bacterial exopeptidase dimerisation domain"/>
    <property type="match status" value="1"/>
</dbReference>
<dbReference type="SUPFAM" id="SSF53187">
    <property type="entry name" value="Zn-dependent exopeptidases"/>
    <property type="match status" value="1"/>
</dbReference>
<dbReference type="PROSITE" id="PS00758">
    <property type="entry name" value="ARGE_DAPE_CPG2_1"/>
    <property type="match status" value="1"/>
</dbReference>
<dbReference type="PROSITE" id="PS00759">
    <property type="entry name" value="ARGE_DAPE_CPG2_2"/>
    <property type="match status" value="1"/>
</dbReference>
<evidence type="ECO:0000255" key="1">
    <source>
        <dbReference type="HAMAP-Rule" id="MF_01108"/>
    </source>
</evidence>
<proteinExistence type="inferred from homology"/>
<name>ARGE_SHISS</name>